<evidence type="ECO:0000255" key="1">
    <source>
        <dbReference type="HAMAP-Rule" id="MF_01966"/>
    </source>
</evidence>
<dbReference type="EC" id="5.1.99.6" evidence="1"/>
<dbReference type="EMBL" id="CP001055">
    <property type="protein sequence ID" value="ACC99019.1"/>
    <property type="molecule type" value="Genomic_DNA"/>
</dbReference>
<dbReference type="RefSeq" id="WP_012415634.1">
    <property type="nucleotide sequence ID" value="NC_010644.1"/>
</dbReference>
<dbReference type="SMR" id="B2KES3"/>
<dbReference type="STRING" id="445932.Emin_1471"/>
<dbReference type="KEGG" id="emi:Emin_1471"/>
<dbReference type="HOGENOM" id="CLU_024853_0_1_0"/>
<dbReference type="OrthoDB" id="9806925at2"/>
<dbReference type="Proteomes" id="UP000001029">
    <property type="component" value="Chromosome"/>
</dbReference>
<dbReference type="GO" id="GO:0000932">
    <property type="term" value="C:P-body"/>
    <property type="evidence" value="ECO:0007669"/>
    <property type="project" value="TreeGrafter"/>
</dbReference>
<dbReference type="GO" id="GO:0046872">
    <property type="term" value="F:metal ion binding"/>
    <property type="evidence" value="ECO:0007669"/>
    <property type="project" value="UniProtKB-KW"/>
</dbReference>
<dbReference type="GO" id="GO:0003729">
    <property type="term" value="F:mRNA binding"/>
    <property type="evidence" value="ECO:0007669"/>
    <property type="project" value="TreeGrafter"/>
</dbReference>
<dbReference type="GO" id="GO:0052856">
    <property type="term" value="F:NAD(P)HX epimerase activity"/>
    <property type="evidence" value="ECO:0007669"/>
    <property type="project" value="UniProtKB-UniRule"/>
</dbReference>
<dbReference type="GO" id="GO:0000166">
    <property type="term" value="F:nucleotide binding"/>
    <property type="evidence" value="ECO:0007669"/>
    <property type="project" value="UniProtKB-KW"/>
</dbReference>
<dbReference type="GO" id="GO:0031087">
    <property type="term" value="P:deadenylation-independent decapping of nuclear-transcribed mRNA"/>
    <property type="evidence" value="ECO:0007669"/>
    <property type="project" value="TreeGrafter"/>
</dbReference>
<dbReference type="GO" id="GO:0033962">
    <property type="term" value="P:P-body assembly"/>
    <property type="evidence" value="ECO:0007669"/>
    <property type="project" value="TreeGrafter"/>
</dbReference>
<dbReference type="Gene3D" id="3.40.50.10260">
    <property type="entry name" value="YjeF N-terminal domain"/>
    <property type="match status" value="1"/>
</dbReference>
<dbReference type="HAMAP" id="MF_01966">
    <property type="entry name" value="NADHX_epimerase"/>
    <property type="match status" value="1"/>
</dbReference>
<dbReference type="InterPro" id="IPR001763">
    <property type="entry name" value="Rhodanese-like_dom"/>
</dbReference>
<dbReference type="InterPro" id="IPR004443">
    <property type="entry name" value="YjeF_N_dom"/>
</dbReference>
<dbReference type="InterPro" id="IPR036652">
    <property type="entry name" value="YjeF_N_dom_sf"/>
</dbReference>
<dbReference type="NCBIfam" id="TIGR00197">
    <property type="entry name" value="yjeF_nterm"/>
    <property type="match status" value="1"/>
</dbReference>
<dbReference type="PANTHER" id="PTHR13612">
    <property type="entry name" value="ENHANCER OF MRNA-DECAPPING PROTEIN 3"/>
    <property type="match status" value="1"/>
</dbReference>
<dbReference type="PANTHER" id="PTHR13612:SF0">
    <property type="entry name" value="ENHANCER OF MRNA-DECAPPING PROTEIN 3"/>
    <property type="match status" value="1"/>
</dbReference>
<dbReference type="Pfam" id="PF03853">
    <property type="entry name" value="YjeF_N"/>
    <property type="match status" value="1"/>
</dbReference>
<dbReference type="SUPFAM" id="SSF64153">
    <property type="entry name" value="YjeF N-terminal domain-like"/>
    <property type="match status" value="1"/>
</dbReference>
<dbReference type="PROSITE" id="PS51385">
    <property type="entry name" value="YJEF_N"/>
    <property type="match status" value="1"/>
</dbReference>
<gene>
    <name evidence="1" type="primary">nnrE</name>
    <name type="ordered locus">Emin_1471</name>
</gene>
<keyword id="KW-0413">Isomerase</keyword>
<keyword id="KW-0479">Metal-binding</keyword>
<keyword id="KW-0520">NAD</keyword>
<keyword id="KW-0521">NADP</keyword>
<keyword id="KW-0547">Nucleotide-binding</keyword>
<keyword id="KW-0630">Potassium</keyword>
<keyword id="KW-1185">Reference proteome</keyword>
<accession>B2KES3</accession>
<sequence length="221" mass="24171">MKTVTSQKMRELETAAVKEFGIDEDVLMEHAGRSAAEEILNCFLSENKEKKVIIVCGHGGNGGDGLVCGRYLMERGVDVYCYIIPPFQGSYKGLVLKNLKRAFFSHLSVKEIYQNLSDLKNSVADAYIVIDALLGIGFKGEVKKNYKETIEVLNSSPSIKIAFDIPSGLNADSGQNEGAVFKADYTYAMGFAKQGCLKAKDICGEIKVLNIGLPKELLSKV</sequence>
<protein>
    <recommendedName>
        <fullName evidence="1">NAD(P)H-hydrate epimerase</fullName>
        <ecNumber evidence="1">5.1.99.6</ecNumber>
    </recommendedName>
    <alternativeName>
        <fullName evidence="1">NAD(P)HX epimerase</fullName>
    </alternativeName>
</protein>
<comment type="function">
    <text evidence="1">Catalyzes the epimerization of the S- and R-forms of NAD(P)HX, a damaged form of NAD(P)H that is a result of enzymatic or heat-dependent hydration. This is a prerequisite for the S-specific NAD(P)H-hydrate dehydratase to allow the repair of both epimers of NAD(P)HX.</text>
</comment>
<comment type="catalytic activity">
    <reaction evidence="1">
        <text>(6R)-NADHX = (6S)-NADHX</text>
        <dbReference type="Rhea" id="RHEA:32215"/>
        <dbReference type="ChEBI" id="CHEBI:64074"/>
        <dbReference type="ChEBI" id="CHEBI:64075"/>
        <dbReference type="EC" id="5.1.99.6"/>
    </reaction>
</comment>
<comment type="catalytic activity">
    <reaction evidence="1">
        <text>(6R)-NADPHX = (6S)-NADPHX</text>
        <dbReference type="Rhea" id="RHEA:32227"/>
        <dbReference type="ChEBI" id="CHEBI:64076"/>
        <dbReference type="ChEBI" id="CHEBI:64077"/>
        <dbReference type="EC" id="5.1.99.6"/>
    </reaction>
</comment>
<comment type="cofactor">
    <cofactor evidence="1">
        <name>K(+)</name>
        <dbReference type="ChEBI" id="CHEBI:29103"/>
    </cofactor>
    <text evidence="1">Binds 1 potassium ion per subunit.</text>
</comment>
<comment type="similarity">
    <text evidence="1">Belongs to the NnrE/AIBP family.</text>
</comment>
<reference key="1">
    <citation type="journal article" date="2009" name="Appl. Environ. Microbiol.">
        <title>Genomic analysis of 'Elusimicrobium minutum,' the first cultivated representative of the phylum 'Elusimicrobia' (formerly termite group 1).</title>
        <authorList>
            <person name="Herlemann D.P.R."/>
            <person name="Geissinger O."/>
            <person name="Ikeda-Ohtsubo W."/>
            <person name="Kunin V."/>
            <person name="Sun H."/>
            <person name="Lapidus A."/>
            <person name="Hugenholtz P."/>
            <person name="Brune A."/>
        </authorList>
    </citation>
    <scope>NUCLEOTIDE SEQUENCE [LARGE SCALE GENOMIC DNA]</scope>
    <source>
        <strain>Pei191</strain>
    </source>
</reference>
<feature type="chain" id="PRO_0000416352" description="NAD(P)H-hydrate epimerase">
    <location>
        <begin position="1"/>
        <end position="221"/>
    </location>
</feature>
<feature type="domain" description="YjeF N-terminal" evidence="1">
    <location>
        <begin position="9"/>
        <end position="219"/>
    </location>
</feature>
<feature type="binding site" evidence="1">
    <location>
        <begin position="60"/>
        <end position="64"/>
    </location>
    <ligand>
        <name>(6S)-NADPHX</name>
        <dbReference type="ChEBI" id="CHEBI:64076"/>
    </ligand>
</feature>
<feature type="binding site" evidence="1">
    <location>
        <position position="61"/>
    </location>
    <ligand>
        <name>K(+)</name>
        <dbReference type="ChEBI" id="CHEBI:29103"/>
    </ligand>
</feature>
<feature type="binding site" evidence="1">
    <location>
        <position position="131"/>
    </location>
    <ligand>
        <name>K(+)</name>
        <dbReference type="ChEBI" id="CHEBI:29103"/>
    </ligand>
</feature>
<feature type="binding site" evidence="1">
    <location>
        <begin position="135"/>
        <end position="141"/>
    </location>
    <ligand>
        <name>(6S)-NADPHX</name>
        <dbReference type="ChEBI" id="CHEBI:64076"/>
    </ligand>
</feature>
<feature type="binding site" evidence="1">
    <location>
        <position position="146"/>
    </location>
    <ligand>
        <name>(6S)-NADPHX</name>
        <dbReference type="ChEBI" id="CHEBI:64076"/>
    </ligand>
</feature>
<feature type="binding site" evidence="1">
    <location>
        <position position="164"/>
    </location>
    <ligand>
        <name>(6S)-NADPHX</name>
        <dbReference type="ChEBI" id="CHEBI:64076"/>
    </ligand>
</feature>
<feature type="binding site" evidence="1">
    <location>
        <position position="167"/>
    </location>
    <ligand>
        <name>K(+)</name>
        <dbReference type="ChEBI" id="CHEBI:29103"/>
    </ligand>
</feature>
<name>NNRE_ELUMP</name>
<proteinExistence type="inferred from homology"/>
<organism>
    <name type="scientific">Elusimicrobium minutum (strain Pei191)</name>
    <dbReference type="NCBI Taxonomy" id="445932"/>
    <lineage>
        <taxon>Bacteria</taxon>
        <taxon>Pseudomonadati</taxon>
        <taxon>Elusimicrobiota</taxon>
        <taxon>Elusimicrobia</taxon>
        <taxon>Elusimicrobiales</taxon>
        <taxon>Elusimicrobiaceae</taxon>
        <taxon>Elusimicrobium</taxon>
    </lineage>
</organism>